<gene>
    <name evidence="1" type="primary">pdxA</name>
    <name type="ordered locus">Sde_0738</name>
</gene>
<keyword id="KW-0170">Cobalt</keyword>
<keyword id="KW-0963">Cytoplasm</keyword>
<keyword id="KW-0460">Magnesium</keyword>
<keyword id="KW-0479">Metal-binding</keyword>
<keyword id="KW-0520">NAD</keyword>
<keyword id="KW-0521">NADP</keyword>
<keyword id="KW-0560">Oxidoreductase</keyword>
<keyword id="KW-0664">Pyridoxine biosynthesis</keyword>
<keyword id="KW-1185">Reference proteome</keyword>
<keyword id="KW-0862">Zinc</keyword>
<reference key="1">
    <citation type="journal article" date="2008" name="PLoS Genet.">
        <title>Complete genome sequence of the complex carbohydrate-degrading marine bacterium, Saccharophagus degradans strain 2-40 T.</title>
        <authorList>
            <person name="Weiner R.M."/>
            <person name="Taylor L.E. II"/>
            <person name="Henrissat B."/>
            <person name="Hauser L."/>
            <person name="Land M."/>
            <person name="Coutinho P.M."/>
            <person name="Rancurel C."/>
            <person name="Saunders E.H."/>
            <person name="Longmire A.G."/>
            <person name="Zhang H."/>
            <person name="Bayer E.A."/>
            <person name="Gilbert H.J."/>
            <person name="Larimer F."/>
            <person name="Zhulin I.B."/>
            <person name="Ekborg N.A."/>
            <person name="Lamed R."/>
            <person name="Richardson P.M."/>
            <person name="Borovok I."/>
            <person name="Hutcheson S."/>
        </authorList>
    </citation>
    <scope>NUCLEOTIDE SEQUENCE [LARGE SCALE GENOMIC DNA]</scope>
    <source>
        <strain>2-40 / ATCC 43961 / DSM 17024</strain>
    </source>
</reference>
<name>PDXA_SACD2</name>
<dbReference type="EC" id="1.1.1.262" evidence="1"/>
<dbReference type="EMBL" id="CP000282">
    <property type="protein sequence ID" value="ABD80000.1"/>
    <property type="molecule type" value="Genomic_DNA"/>
</dbReference>
<dbReference type="RefSeq" id="WP_011467221.1">
    <property type="nucleotide sequence ID" value="NC_007912.1"/>
</dbReference>
<dbReference type="SMR" id="Q21MS9"/>
<dbReference type="STRING" id="203122.Sde_0738"/>
<dbReference type="GeneID" id="98612423"/>
<dbReference type="KEGG" id="sde:Sde_0738"/>
<dbReference type="eggNOG" id="COG1995">
    <property type="taxonomic scope" value="Bacteria"/>
</dbReference>
<dbReference type="HOGENOM" id="CLU_040168_2_0_6"/>
<dbReference type="OrthoDB" id="9801783at2"/>
<dbReference type="UniPathway" id="UPA00244">
    <property type="reaction ID" value="UER00312"/>
</dbReference>
<dbReference type="Proteomes" id="UP000001947">
    <property type="component" value="Chromosome"/>
</dbReference>
<dbReference type="GO" id="GO:0005737">
    <property type="term" value="C:cytoplasm"/>
    <property type="evidence" value="ECO:0007669"/>
    <property type="project" value="UniProtKB-SubCell"/>
</dbReference>
<dbReference type="GO" id="GO:0050570">
    <property type="term" value="F:4-hydroxythreonine-4-phosphate dehydrogenase activity"/>
    <property type="evidence" value="ECO:0007669"/>
    <property type="project" value="UniProtKB-UniRule"/>
</dbReference>
<dbReference type="GO" id="GO:0050897">
    <property type="term" value="F:cobalt ion binding"/>
    <property type="evidence" value="ECO:0007669"/>
    <property type="project" value="UniProtKB-UniRule"/>
</dbReference>
<dbReference type="GO" id="GO:0000287">
    <property type="term" value="F:magnesium ion binding"/>
    <property type="evidence" value="ECO:0007669"/>
    <property type="project" value="UniProtKB-UniRule"/>
</dbReference>
<dbReference type="GO" id="GO:0051287">
    <property type="term" value="F:NAD binding"/>
    <property type="evidence" value="ECO:0007669"/>
    <property type="project" value="InterPro"/>
</dbReference>
<dbReference type="GO" id="GO:0008270">
    <property type="term" value="F:zinc ion binding"/>
    <property type="evidence" value="ECO:0007669"/>
    <property type="project" value="UniProtKB-UniRule"/>
</dbReference>
<dbReference type="GO" id="GO:0042823">
    <property type="term" value="P:pyridoxal phosphate biosynthetic process"/>
    <property type="evidence" value="ECO:0007669"/>
    <property type="project" value="UniProtKB-UniRule"/>
</dbReference>
<dbReference type="GO" id="GO:0008615">
    <property type="term" value="P:pyridoxine biosynthetic process"/>
    <property type="evidence" value="ECO:0007669"/>
    <property type="project" value="UniProtKB-UniRule"/>
</dbReference>
<dbReference type="Gene3D" id="3.40.718.10">
    <property type="entry name" value="Isopropylmalate Dehydrogenase"/>
    <property type="match status" value="1"/>
</dbReference>
<dbReference type="HAMAP" id="MF_00536">
    <property type="entry name" value="PdxA"/>
    <property type="match status" value="1"/>
</dbReference>
<dbReference type="InterPro" id="IPR037510">
    <property type="entry name" value="PdxA"/>
</dbReference>
<dbReference type="InterPro" id="IPR005255">
    <property type="entry name" value="PdxA_fam"/>
</dbReference>
<dbReference type="NCBIfam" id="TIGR00557">
    <property type="entry name" value="pdxA"/>
    <property type="match status" value="1"/>
</dbReference>
<dbReference type="PANTHER" id="PTHR30004">
    <property type="entry name" value="4-HYDROXYTHREONINE-4-PHOSPHATE DEHYDROGENASE"/>
    <property type="match status" value="1"/>
</dbReference>
<dbReference type="PANTHER" id="PTHR30004:SF5">
    <property type="entry name" value="4-HYDROXYTHREONINE-4-PHOSPHATE DEHYDROGENASE"/>
    <property type="match status" value="1"/>
</dbReference>
<dbReference type="Pfam" id="PF04166">
    <property type="entry name" value="PdxA"/>
    <property type="match status" value="1"/>
</dbReference>
<dbReference type="SUPFAM" id="SSF53659">
    <property type="entry name" value="Isocitrate/Isopropylmalate dehydrogenase-like"/>
    <property type="match status" value="1"/>
</dbReference>
<sequence length="335" mass="35022">MSHPAIIALTPGEPAGIGPDLTVMAAQQARDYPLVALCDPQLLKDRAKLLGLPLTVSTYIQGSAVTTSAQHISVMPIPLGAPCEAGTLDSTNAAYVIETLKQATEGCLSGEFAAVVTGPVQKSVINEAGINFSGHTEYFADNSNTPRVVMMLATEGLRVALATTHLPLKDVSAAITTASLTETLNILLADLQLKFGLSQPRVLVCGLNPHAGEGGHLGMEEIDTIIPVLEQFRARGHNLVGPLPADTLFNPKYLSDADAVLAMYHDQGLPVLKYKGFGNAVNITLGLPFIRTSVDHGTALDLAGTGKANIGSLQVALGYAQNLAMQQASINEIAG</sequence>
<comment type="function">
    <text evidence="1">Catalyzes the NAD(P)-dependent oxidation of 4-(phosphooxy)-L-threonine (HTP) into 2-amino-3-oxo-4-(phosphooxy)butyric acid which spontaneously decarboxylates to form 3-amino-2-oxopropyl phosphate (AHAP).</text>
</comment>
<comment type="catalytic activity">
    <reaction evidence="1">
        <text>4-(phosphooxy)-L-threonine + NAD(+) = 3-amino-2-oxopropyl phosphate + CO2 + NADH</text>
        <dbReference type="Rhea" id="RHEA:32275"/>
        <dbReference type="ChEBI" id="CHEBI:16526"/>
        <dbReference type="ChEBI" id="CHEBI:57279"/>
        <dbReference type="ChEBI" id="CHEBI:57540"/>
        <dbReference type="ChEBI" id="CHEBI:57945"/>
        <dbReference type="ChEBI" id="CHEBI:58452"/>
        <dbReference type="EC" id="1.1.1.262"/>
    </reaction>
</comment>
<comment type="cofactor">
    <cofactor evidence="1">
        <name>Zn(2+)</name>
        <dbReference type="ChEBI" id="CHEBI:29105"/>
    </cofactor>
    <cofactor evidence="1">
        <name>Mg(2+)</name>
        <dbReference type="ChEBI" id="CHEBI:18420"/>
    </cofactor>
    <cofactor evidence="1">
        <name>Co(2+)</name>
        <dbReference type="ChEBI" id="CHEBI:48828"/>
    </cofactor>
    <text evidence="1">Binds 1 divalent metal cation per subunit. Can use ions such as Zn(2+), Mg(2+) or Co(2+).</text>
</comment>
<comment type="pathway">
    <text evidence="1">Cofactor biosynthesis; pyridoxine 5'-phosphate biosynthesis; pyridoxine 5'-phosphate from D-erythrose 4-phosphate: step 4/5.</text>
</comment>
<comment type="subunit">
    <text evidence="1">Homodimer.</text>
</comment>
<comment type="subcellular location">
    <subcellularLocation>
        <location evidence="1">Cytoplasm</location>
    </subcellularLocation>
</comment>
<comment type="miscellaneous">
    <text evidence="1">The active site is located at the dimer interface.</text>
</comment>
<comment type="similarity">
    <text evidence="1">Belongs to the PdxA family.</text>
</comment>
<accession>Q21MS9</accession>
<proteinExistence type="inferred from homology"/>
<evidence type="ECO:0000255" key="1">
    <source>
        <dbReference type="HAMAP-Rule" id="MF_00536"/>
    </source>
</evidence>
<protein>
    <recommendedName>
        <fullName evidence="1">4-hydroxythreonine-4-phosphate dehydrogenase</fullName>
        <ecNumber evidence="1">1.1.1.262</ecNumber>
    </recommendedName>
    <alternativeName>
        <fullName evidence="1">4-(phosphohydroxy)-L-threonine dehydrogenase</fullName>
    </alternativeName>
</protein>
<organism>
    <name type="scientific">Saccharophagus degradans (strain 2-40 / ATCC 43961 / DSM 17024)</name>
    <dbReference type="NCBI Taxonomy" id="203122"/>
    <lineage>
        <taxon>Bacteria</taxon>
        <taxon>Pseudomonadati</taxon>
        <taxon>Pseudomonadota</taxon>
        <taxon>Gammaproteobacteria</taxon>
        <taxon>Cellvibrionales</taxon>
        <taxon>Cellvibrionaceae</taxon>
        <taxon>Saccharophagus</taxon>
    </lineage>
</organism>
<feature type="chain" id="PRO_1000051513" description="4-hydroxythreonine-4-phosphate dehydrogenase">
    <location>
        <begin position="1"/>
        <end position="335"/>
    </location>
</feature>
<feature type="binding site" evidence="1">
    <location>
        <position position="135"/>
    </location>
    <ligand>
        <name>substrate</name>
    </ligand>
</feature>
<feature type="binding site" evidence="1">
    <location>
        <position position="136"/>
    </location>
    <ligand>
        <name>substrate</name>
    </ligand>
</feature>
<feature type="binding site" evidence="1">
    <location>
        <position position="165"/>
    </location>
    <ligand>
        <name>a divalent metal cation</name>
        <dbReference type="ChEBI" id="CHEBI:60240"/>
        <note>ligand shared between dimeric partners</note>
    </ligand>
</feature>
<feature type="binding site" evidence="1">
    <location>
        <position position="210"/>
    </location>
    <ligand>
        <name>a divalent metal cation</name>
        <dbReference type="ChEBI" id="CHEBI:60240"/>
        <note>ligand shared between dimeric partners</note>
    </ligand>
</feature>
<feature type="binding site" evidence="1">
    <location>
        <position position="265"/>
    </location>
    <ligand>
        <name>a divalent metal cation</name>
        <dbReference type="ChEBI" id="CHEBI:60240"/>
        <note>ligand shared between dimeric partners</note>
    </ligand>
</feature>
<feature type="binding site" evidence="1">
    <location>
        <position position="273"/>
    </location>
    <ligand>
        <name>substrate</name>
    </ligand>
</feature>
<feature type="binding site" evidence="1">
    <location>
        <position position="282"/>
    </location>
    <ligand>
        <name>substrate</name>
    </ligand>
</feature>
<feature type="binding site" evidence="1">
    <location>
        <position position="291"/>
    </location>
    <ligand>
        <name>substrate</name>
    </ligand>
</feature>